<accession>Q94LW6</accession>
<keyword id="KW-0472">Membrane</keyword>
<keyword id="KW-1185">Reference proteome</keyword>
<keyword id="KW-0764">Sulfate transport</keyword>
<keyword id="KW-0769">Symport</keyword>
<keyword id="KW-0812">Transmembrane</keyword>
<keyword id="KW-1133">Transmembrane helix</keyword>
<keyword id="KW-0813">Transport</keyword>
<dbReference type="EMBL" id="AB061739">
    <property type="protein sequence ID" value="BAB55634.1"/>
    <property type="molecule type" value="mRNA"/>
</dbReference>
<dbReference type="EMBL" id="AF296838">
    <property type="status" value="NOT_ANNOTATED_CDS"/>
    <property type="molecule type" value="Genomic_DNA"/>
</dbReference>
<dbReference type="EMBL" id="CP002688">
    <property type="protein sequence ID" value="AED92729.1"/>
    <property type="molecule type" value="Genomic_DNA"/>
</dbReference>
<dbReference type="RefSeq" id="NP_568377.1">
    <property type="nucleotide sequence ID" value="NM_121965.4"/>
</dbReference>
<dbReference type="SMR" id="Q94LW6"/>
<dbReference type="FunCoup" id="Q94LW6">
    <property type="interactions" value="441"/>
</dbReference>
<dbReference type="STRING" id="3702.Q94LW6"/>
<dbReference type="PaxDb" id="3702-AT5G19600.1"/>
<dbReference type="ProteomicsDB" id="226758"/>
<dbReference type="EnsemblPlants" id="AT5G19600.1">
    <property type="protein sequence ID" value="AT5G19600.1"/>
    <property type="gene ID" value="AT5G19600"/>
</dbReference>
<dbReference type="GeneID" id="832080"/>
<dbReference type="Gramene" id="AT5G19600.1">
    <property type="protein sequence ID" value="AT5G19600.1"/>
    <property type="gene ID" value="AT5G19600"/>
</dbReference>
<dbReference type="KEGG" id="ath:AT5G19600"/>
<dbReference type="Araport" id="AT5G19600"/>
<dbReference type="TAIR" id="AT5G19600">
    <property type="gene designation" value="SULTR3"/>
</dbReference>
<dbReference type="eggNOG" id="KOG0236">
    <property type="taxonomic scope" value="Eukaryota"/>
</dbReference>
<dbReference type="HOGENOM" id="CLU_003182_13_2_1"/>
<dbReference type="InParanoid" id="Q94LW6"/>
<dbReference type="OMA" id="ICWGLVD"/>
<dbReference type="PhylomeDB" id="Q94LW6"/>
<dbReference type="PRO" id="PR:Q94LW6"/>
<dbReference type="Proteomes" id="UP000006548">
    <property type="component" value="Chromosome 5"/>
</dbReference>
<dbReference type="ExpressionAtlas" id="Q94LW6">
    <property type="expression patterns" value="baseline and differential"/>
</dbReference>
<dbReference type="GO" id="GO:0016020">
    <property type="term" value="C:membrane"/>
    <property type="evidence" value="ECO:0007669"/>
    <property type="project" value="UniProtKB-SubCell"/>
</dbReference>
<dbReference type="GO" id="GO:0008271">
    <property type="term" value="F:secondary active sulfate transmembrane transporter activity"/>
    <property type="evidence" value="ECO:0007669"/>
    <property type="project" value="InterPro"/>
</dbReference>
<dbReference type="GO" id="GO:0015293">
    <property type="term" value="F:symporter activity"/>
    <property type="evidence" value="ECO:0007669"/>
    <property type="project" value="UniProtKB-KW"/>
</dbReference>
<dbReference type="CDD" id="cd07042">
    <property type="entry name" value="STAS_SulP_like_sulfate_transporter"/>
    <property type="match status" value="1"/>
</dbReference>
<dbReference type="Gene3D" id="3.30.750.24">
    <property type="entry name" value="STAS domain"/>
    <property type="match status" value="1"/>
</dbReference>
<dbReference type="InterPro" id="IPR018045">
    <property type="entry name" value="S04_transporter_CS"/>
</dbReference>
<dbReference type="InterPro" id="IPR011547">
    <property type="entry name" value="SLC26A/SulP_dom"/>
</dbReference>
<dbReference type="InterPro" id="IPR001902">
    <property type="entry name" value="SLC26A/SulP_fam"/>
</dbReference>
<dbReference type="InterPro" id="IPR002645">
    <property type="entry name" value="STAS_dom"/>
</dbReference>
<dbReference type="InterPro" id="IPR036513">
    <property type="entry name" value="STAS_dom_sf"/>
</dbReference>
<dbReference type="NCBIfam" id="TIGR00815">
    <property type="entry name" value="sulP"/>
    <property type="match status" value="1"/>
</dbReference>
<dbReference type="PANTHER" id="PTHR11814">
    <property type="entry name" value="SULFATE TRANSPORTER"/>
    <property type="match status" value="1"/>
</dbReference>
<dbReference type="Pfam" id="PF01740">
    <property type="entry name" value="STAS"/>
    <property type="match status" value="1"/>
</dbReference>
<dbReference type="Pfam" id="PF00916">
    <property type="entry name" value="Sulfate_transp"/>
    <property type="match status" value="1"/>
</dbReference>
<dbReference type="SUPFAM" id="SSF52091">
    <property type="entry name" value="SpoIIaa-like"/>
    <property type="match status" value="1"/>
</dbReference>
<dbReference type="PROSITE" id="PS01130">
    <property type="entry name" value="SLC26A"/>
    <property type="match status" value="1"/>
</dbReference>
<dbReference type="PROSITE" id="PS50801">
    <property type="entry name" value="STAS"/>
    <property type="match status" value="1"/>
</dbReference>
<name>SUT35_ARATH</name>
<reference key="1">
    <citation type="submission" date="2001-05" db="EMBL/GenBank/DDBJ databases">
        <title>cDNA for sulfate transporter Sultr3;5.</title>
        <authorList>
            <person name="Takahashi H."/>
            <person name="Hayashi N."/>
            <person name="Yamaya T."/>
        </authorList>
    </citation>
    <scope>NUCLEOTIDE SEQUENCE [MRNA]</scope>
</reference>
<reference key="2">
    <citation type="journal article" date="2000" name="Nature">
        <title>Sequence and analysis of chromosome 5 of the plant Arabidopsis thaliana.</title>
        <authorList>
            <person name="Tabata S."/>
            <person name="Kaneko T."/>
            <person name="Nakamura Y."/>
            <person name="Kotani H."/>
            <person name="Kato T."/>
            <person name="Asamizu E."/>
            <person name="Miyajima N."/>
            <person name="Sasamoto S."/>
            <person name="Kimura T."/>
            <person name="Hosouchi T."/>
            <person name="Kawashima K."/>
            <person name="Kohara M."/>
            <person name="Matsumoto M."/>
            <person name="Matsuno A."/>
            <person name="Muraki A."/>
            <person name="Nakayama S."/>
            <person name="Nakazaki N."/>
            <person name="Naruo K."/>
            <person name="Okumura S."/>
            <person name="Shinpo S."/>
            <person name="Takeuchi C."/>
            <person name="Wada T."/>
            <person name="Watanabe A."/>
            <person name="Yamada M."/>
            <person name="Yasuda M."/>
            <person name="Sato S."/>
            <person name="de la Bastide M."/>
            <person name="Huang E."/>
            <person name="Spiegel L."/>
            <person name="Gnoj L."/>
            <person name="O'Shaughnessy A."/>
            <person name="Preston R."/>
            <person name="Habermann K."/>
            <person name="Murray J."/>
            <person name="Johnson D."/>
            <person name="Rohlfing T."/>
            <person name="Nelson J."/>
            <person name="Stoneking T."/>
            <person name="Pepin K."/>
            <person name="Spieth J."/>
            <person name="Sekhon M."/>
            <person name="Armstrong J."/>
            <person name="Becker M."/>
            <person name="Belter E."/>
            <person name="Cordum H."/>
            <person name="Cordes M."/>
            <person name="Courtney L."/>
            <person name="Courtney W."/>
            <person name="Dante M."/>
            <person name="Du H."/>
            <person name="Edwards J."/>
            <person name="Fryman J."/>
            <person name="Haakensen B."/>
            <person name="Lamar E."/>
            <person name="Latreille P."/>
            <person name="Leonard S."/>
            <person name="Meyer R."/>
            <person name="Mulvaney E."/>
            <person name="Ozersky P."/>
            <person name="Riley A."/>
            <person name="Strowmatt C."/>
            <person name="Wagner-McPherson C."/>
            <person name="Wollam A."/>
            <person name="Yoakum M."/>
            <person name="Bell M."/>
            <person name="Dedhia N."/>
            <person name="Parnell L."/>
            <person name="Shah R."/>
            <person name="Rodriguez M."/>
            <person name="Hoon See L."/>
            <person name="Vil D."/>
            <person name="Baker J."/>
            <person name="Kirchoff K."/>
            <person name="Toth K."/>
            <person name="King L."/>
            <person name="Bahret A."/>
            <person name="Miller B."/>
            <person name="Marra M.A."/>
            <person name="Martienssen R."/>
            <person name="McCombie W.R."/>
            <person name="Wilson R.K."/>
            <person name="Murphy G."/>
            <person name="Bancroft I."/>
            <person name="Volckaert G."/>
            <person name="Wambutt R."/>
            <person name="Duesterhoeft A."/>
            <person name="Stiekema W."/>
            <person name="Pohl T."/>
            <person name="Entian K.-D."/>
            <person name="Terryn N."/>
            <person name="Hartley N."/>
            <person name="Bent E."/>
            <person name="Johnson S."/>
            <person name="Langham S.-A."/>
            <person name="McCullagh B."/>
            <person name="Robben J."/>
            <person name="Grymonprez B."/>
            <person name="Zimmermann W."/>
            <person name="Ramsperger U."/>
            <person name="Wedler H."/>
            <person name="Balke K."/>
            <person name="Wedler E."/>
            <person name="Peters S."/>
            <person name="van Staveren M."/>
            <person name="Dirkse W."/>
            <person name="Mooijman P."/>
            <person name="Klein Lankhorst R."/>
            <person name="Weitzenegger T."/>
            <person name="Bothe G."/>
            <person name="Rose M."/>
            <person name="Hauf J."/>
            <person name="Berneiser S."/>
            <person name="Hempel S."/>
            <person name="Feldpausch M."/>
            <person name="Lamberth S."/>
            <person name="Villarroel R."/>
            <person name="Gielen J."/>
            <person name="Ardiles W."/>
            <person name="Bents O."/>
            <person name="Lemcke K."/>
            <person name="Kolesov G."/>
            <person name="Mayer K.F.X."/>
            <person name="Rudd S."/>
            <person name="Schoof H."/>
            <person name="Schueller C."/>
            <person name="Zaccaria P."/>
            <person name="Mewes H.-W."/>
            <person name="Bevan M."/>
            <person name="Fransz P.F."/>
        </authorList>
    </citation>
    <scope>NUCLEOTIDE SEQUENCE [LARGE SCALE GENOMIC DNA]</scope>
    <source>
        <strain>cv. Columbia</strain>
    </source>
</reference>
<reference key="3">
    <citation type="journal article" date="2017" name="Plant J.">
        <title>Araport11: a complete reannotation of the Arabidopsis thaliana reference genome.</title>
        <authorList>
            <person name="Cheng C.Y."/>
            <person name="Krishnakumar V."/>
            <person name="Chan A.P."/>
            <person name="Thibaud-Nissen F."/>
            <person name="Schobel S."/>
            <person name="Town C.D."/>
        </authorList>
    </citation>
    <scope>GENOME REANNOTATION</scope>
    <source>
        <strain>cv. Columbia</strain>
    </source>
</reference>
<protein>
    <recommendedName>
        <fullName>Probable sulfate transporter 3.5</fullName>
    </recommendedName>
</protein>
<sequence length="634" mass="70360">MENTITSSTSSPKGRGVNFSTPRGFGSKFKSKCKETFFPDDPFKPISQEPNRLLKTKKLLEYFVPIFEWLPKYDMQKLKYDVLAGITITSLAVPQGISYAKLASIPPIIGLYSSFVPPFVYAVFGSSNNLAVGTVAACSLLIAETFGEEMIKNEPELYLHLIFTATLITGLFQFAMGFLRLGILVDFLSHSTITGFMGGTAIIILLQQLKGIFGLVHFTHKTDVVSVLHSILDNRAEWKWQSTLAGVCFLVFLQSTRYIKQRYPKLFWVSAMGPMVVVVVGCVVAYLVKGTAHGIATVGPLKKGLNPPSIQLLNFDSKYLGMVFKAGIVTGLIALAEGIAIGRSFAVMKNEQTDGNKEMIAFGLMNVIGSFTSCYLTTGPFSKTAVNYNAGTKTPMSNVVMGVCMMLVLLFLAPLFSYTPLVGLSAIIMSAMLGLINYEEMYHLFKVDKFDFLVCMSAFFGVSFLSMDYGLIISVGFSIVRALLYVARPSTCKLGRIPNSVMFRDIEQYPASEEMLGYIILQLGSPVFFANSTYVRERILRWIRDEPEAIEFLLLDLSGVSTIDMTGMETLLEIQRILGSKNIKMVIINPRFEVLEKMMLSHFVEKIGKEYMFLSIDDAVQACRFNLTTTKPEV</sequence>
<evidence type="ECO:0000250" key="1"/>
<evidence type="ECO:0000255" key="2"/>
<evidence type="ECO:0000255" key="3">
    <source>
        <dbReference type="PROSITE-ProRule" id="PRU00198"/>
    </source>
</evidence>
<evidence type="ECO:0000256" key="4">
    <source>
        <dbReference type="SAM" id="MobiDB-lite"/>
    </source>
</evidence>
<evidence type="ECO:0000305" key="5"/>
<proteinExistence type="evidence at transcript level"/>
<feature type="chain" id="PRO_0000080181" description="Probable sulfate transporter 3.5">
    <location>
        <begin position="1"/>
        <end position="634"/>
    </location>
</feature>
<feature type="topological domain" description="Cytoplasmic" evidence="2">
    <location>
        <begin position="1"/>
        <end position="81"/>
    </location>
</feature>
<feature type="transmembrane region" description="Helical" evidence="2">
    <location>
        <begin position="82"/>
        <end position="102"/>
    </location>
</feature>
<feature type="topological domain" description="Extracellular" evidence="2">
    <location>
        <begin position="103"/>
        <end position="104"/>
    </location>
</feature>
<feature type="transmembrane region" description="Helical" evidence="2">
    <location>
        <begin position="105"/>
        <end position="125"/>
    </location>
</feature>
<feature type="topological domain" description="Cytoplasmic" evidence="2">
    <location>
        <begin position="126"/>
        <end position="130"/>
    </location>
</feature>
<feature type="transmembrane region" description="Helical" evidence="2">
    <location>
        <begin position="131"/>
        <end position="151"/>
    </location>
</feature>
<feature type="topological domain" description="Extracellular" evidence="2">
    <location>
        <begin position="152"/>
        <end position="158"/>
    </location>
</feature>
<feature type="transmembrane region" description="Helical" evidence="2">
    <location>
        <begin position="159"/>
        <end position="179"/>
    </location>
</feature>
<feature type="topological domain" description="Cytoplasmic" evidence="2">
    <location>
        <begin position="180"/>
        <end position="195"/>
    </location>
</feature>
<feature type="transmembrane region" description="Helical" evidence="2">
    <location>
        <begin position="196"/>
        <end position="216"/>
    </location>
</feature>
<feature type="topological domain" description="Extracellular" evidence="2">
    <location>
        <begin position="217"/>
        <end position="239"/>
    </location>
</feature>
<feature type="transmembrane region" description="Helical" evidence="2">
    <location>
        <begin position="240"/>
        <end position="260"/>
    </location>
</feature>
<feature type="topological domain" description="Cytoplasmic" evidence="2">
    <location>
        <begin position="261"/>
        <end position="265"/>
    </location>
</feature>
<feature type="transmembrane region" description="Helical" evidence="2">
    <location>
        <begin position="266"/>
        <end position="286"/>
    </location>
</feature>
<feature type="topological domain" description="Extracellular" evidence="2">
    <location>
        <begin position="287"/>
        <end position="321"/>
    </location>
</feature>
<feature type="transmembrane region" description="Helical" evidence="2">
    <location>
        <begin position="322"/>
        <end position="342"/>
    </location>
</feature>
<feature type="topological domain" description="Cytoplasmic" evidence="2">
    <location>
        <begin position="343"/>
        <end position="358"/>
    </location>
</feature>
<feature type="transmembrane region" description="Helical" evidence="2">
    <location>
        <begin position="359"/>
        <end position="379"/>
    </location>
</feature>
<feature type="topological domain" description="Extracellular" evidence="2">
    <location>
        <begin position="380"/>
        <end position="395"/>
    </location>
</feature>
<feature type="transmembrane region" description="Helical" evidence="2">
    <location>
        <begin position="396"/>
        <end position="416"/>
    </location>
</feature>
<feature type="topological domain" description="Cytoplasmic" evidence="2">
    <location>
        <begin position="417"/>
        <end position="420"/>
    </location>
</feature>
<feature type="transmembrane region" description="Helical" evidence="2">
    <location>
        <begin position="421"/>
        <end position="441"/>
    </location>
</feature>
<feature type="topological domain" description="Extracellular" evidence="2">
    <location>
        <begin position="442"/>
        <end position="458"/>
    </location>
</feature>
<feature type="transmembrane region" description="Helical" evidence="2">
    <location>
        <begin position="459"/>
        <end position="479"/>
    </location>
</feature>
<feature type="topological domain" description="Cytoplasmic" evidence="2">
    <location>
        <begin position="480"/>
        <end position="634"/>
    </location>
</feature>
<feature type="domain" description="STAS" evidence="3">
    <location>
        <begin position="508"/>
        <end position="623"/>
    </location>
</feature>
<feature type="region of interest" description="Disordered" evidence="4">
    <location>
        <begin position="1"/>
        <end position="25"/>
    </location>
</feature>
<feature type="compositionally biased region" description="Polar residues" evidence="4">
    <location>
        <begin position="1"/>
        <end position="12"/>
    </location>
</feature>
<gene>
    <name type="primary">SULTR3;5</name>
    <name type="ordered locus">At5g19600</name>
    <name type="ORF">T29J13.20</name>
</gene>
<comment type="function">
    <text evidence="1">H(+)/sulfate cotransporter that may play a role in the regulation of sulfate assimilation.</text>
</comment>
<comment type="subcellular location">
    <subcellularLocation>
        <location evidence="5">Membrane</location>
        <topology evidence="5">Multi-pass membrane protein</topology>
    </subcellularLocation>
</comment>
<comment type="similarity">
    <text evidence="5">Belongs to the SLC26A/SulP transporter (TC 2.A.53) family.</text>
</comment>
<organism>
    <name type="scientific">Arabidopsis thaliana</name>
    <name type="common">Mouse-ear cress</name>
    <dbReference type="NCBI Taxonomy" id="3702"/>
    <lineage>
        <taxon>Eukaryota</taxon>
        <taxon>Viridiplantae</taxon>
        <taxon>Streptophyta</taxon>
        <taxon>Embryophyta</taxon>
        <taxon>Tracheophyta</taxon>
        <taxon>Spermatophyta</taxon>
        <taxon>Magnoliopsida</taxon>
        <taxon>eudicotyledons</taxon>
        <taxon>Gunneridae</taxon>
        <taxon>Pentapetalae</taxon>
        <taxon>rosids</taxon>
        <taxon>malvids</taxon>
        <taxon>Brassicales</taxon>
        <taxon>Brassicaceae</taxon>
        <taxon>Camelineae</taxon>
        <taxon>Arabidopsis</taxon>
    </lineage>
</organism>